<sequence>MSWLFGIKGPKGEGTGPPLPLPPAQPGAESGGDRGAGDRPSPKDKWSNFDPTGLERAAKAARELEHSRHAKEALNLAQMQEQTLQLEQQSKLKEYEAAVEQLKSEQIRVQAEERRKTLNEETRQHQARAQYQDKLARQRYEDQLKQQQLLNEENLRKQEESVQKQEAIRRATVEREMELRHKNEMLRVEAEARARAKADRENADIIREQIRLKAAEHRQTILESIRTAGTLFGEGFRAFVTDWDKVTATVAGLTLLAVGVYSAKNATSVAGRYIEARLGKPSLVRETSRISVLEALRHPIQVSRRLVSRPQDALEGVILSPSLEARVRDIAIATRNTKKNKSLYRNVLMYGPPGTGKTLFAKKLALHSGMDYAIMTGGDVAPMGREGVTAMHKVFDWASTSRRGLLLFVDEADAFLRKRATEKISEDLRATLNAFLHRTGQHSNKFMLVLASNQPEQFDWAINDRIDEMVCFALPQREERERLVRMYFDKYVLKPATEGKQRLKVAQFDYGKKCSEVAQLTAGMSGREIAQLAVAWQAMAYSSEDGVLTEAMMDARVQDAVQQHQQKMQWLKVERPDSEASKPPHPSLLSC</sequence>
<protein>
    <recommendedName>
        <fullName>ATPase family AAA domain-containing protein 3A</fullName>
        <ecNumber evidence="3">3.6.1.-</ecNumber>
    </recommendedName>
</protein>
<name>ATD3A_RAT</name>
<comment type="function">
    <text evidence="3">Essential for mitochondrial network organization, mitochondrial metabolism and cell growth at organism and cellular level. May play an important role in mitochondrial protein synthesis. May also participate in mitochondrial DNA replication. May bind to mitochondrial DNA D-loops and contribute to nucleoid stability. Required for enhanced channeling of cholesterol for hormone-dependent steroidogenesis. Involved in mitochondrial-mediated antiviral innate immunity. Required to protect mitochondria from the PERK-mediated unfolded protein response: specifically inhibits the activity of EIF2AK3/PERK at mitochondria-endoplasmic reticulum contact sites, thereby providing a safe haven for mitochondrial protein translation during endoplasmic reticulum stress. Ability to inhibit EIF2AK3/PERK is independent of its ATPase activity. Also involved in the mitochondrial DNA damage response by promoting signaling between damaged genomes and the mitochondrial membrane, leading to activation of the integrated stress response (ISR).</text>
</comment>
<comment type="catalytic activity">
    <reaction evidence="3">
        <text>ATP + H2O = ADP + phosphate + H(+)</text>
        <dbReference type="Rhea" id="RHEA:13065"/>
        <dbReference type="ChEBI" id="CHEBI:15377"/>
        <dbReference type="ChEBI" id="CHEBI:15378"/>
        <dbReference type="ChEBI" id="CHEBI:30616"/>
        <dbReference type="ChEBI" id="CHEBI:43474"/>
        <dbReference type="ChEBI" id="CHEBI:456216"/>
    </reaction>
    <physiologicalReaction direction="left-to-right" evidence="3">
        <dbReference type="Rhea" id="RHEA:13066"/>
    </physiologicalReaction>
</comment>
<comment type="subunit">
    <text evidence="3 7">Can form homooligomers (By similarity). Homodimer formation at the N-terminus may be regulated by ATP and is required for the interaction with the inner surface of the mitochondrial outer membrane and correct mitochondrial homeostasis (By similarity). Interacts with components of the mitochondrial ribosome and with other proteins involved in mitochondrial RNA metabolism (By similarity). May also interact with protein involved in lipid metabolism, including STARD9 (By similarity). May interact with FAM210A (By similarity). Interacts with GADD45GIP1 (By similarity). Interacts with S100B in a Ca(+2)- and Zn(+2)-dependent manner; this interaction probably occurs in the cytosol prior to mitochondrial targeting (PubMed:20351179). S100B could assist ATAD3A cytoplasmic processing, preventing aggregation and favoring mitochondrial localization (PubMed:20351179). Interacts with HSP60/HSPD1 (By similarity). Interacts with CLPB (By similarity). Interacts with EIF2AK3/PERK; ATAD3A and EIF2S1/eIF-2-alpha occupy a common binding site within the cytoplasmic loop of EIF2AK3/PERK, leading to prevent EIF2AK3/PERK association with its substrate EIF2S1/eIF-2-alpha (By similarity).</text>
</comment>
<comment type="subcellular location">
    <subcellularLocation>
        <location evidence="6">Mitochondrion inner membrane</location>
        <topology evidence="3">Single-pass membrane protein</topology>
    </subcellularLocation>
    <subcellularLocation>
        <location evidence="3">Mitochondrion matrix</location>
        <location evidence="3">Mitochondrion nucleoid</location>
    </subcellularLocation>
    <text evidence="3">In the mitochondrial inner membrane, enriched in sites with the potential to form contacts with the outer membrane. The N-terminal domain interacts with the inner surface of the mitochondrial outer membrane and the C-terminal domain localizes in a specific matrix compartment, where it is associated with nucleoids. Also present at mitochondria-endoplasmic reticulum contact sites; where it interacts with EIF2AK3/PERK.</text>
</comment>
<comment type="developmental stage">
    <text evidence="7">Up-regulated during oligodendrocyte progenitor cell differentiation.</text>
</comment>
<comment type="domain">
    <text evidence="3">The transmembrane domain and a C-terminal adjacent region contain all information necessary for mitochondrial targeting.</text>
</comment>
<comment type="similarity">
    <text evidence="8">Belongs to the AAA ATPase family.</text>
</comment>
<reference key="1">
    <citation type="journal article" date="2004" name="Genome Res.">
        <title>The status, quality, and expansion of the NIH full-length cDNA project: the Mammalian Gene Collection (MGC).</title>
        <authorList>
            <consortium name="The MGC Project Team"/>
        </authorList>
    </citation>
    <scope>NUCLEOTIDE SEQUENCE [LARGE SCALE MRNA]</scope>
    <source>
        <tissue>Prostate</tissue>
    </source>
</reference>
<reference key="2">
    <citation type="journal article" date="2007" name="J. Cell Biol.">
        <title>The AAA+ protein ATAD3 has displacement loop binding properties and is involved in mitochondrial nucleoid organization.</title>
        <authorList>
            <person name="He J."/>
            <person name="Mao C.C."/>
            <person name="Reyes A."/>
            <person name="Sembongi H."/>
            <person name="Di Re M."/>
            <person name="Granycome C."/>
            <person name="Clippingdale A.B."/>
            <person name="Fearnley I.M."/>
            <person name="Harbour M."/>
            <person name="Robinson A.J."/>
            <person name="Reichelt S."/>
            <person name="Spelbrink J.N."/>
            <person name="Walker J.E."/>
            <person name="Holt I.J."/>
        </authorList>
    </citation>
    <scope>SUBCELLULAR LOCATION</scope>
</reference>
<reference key="3">
    <citation type="journal article" date="2010" name="Mol. Cell. Biol.">
        <title>The calcium-dependent interaction between S100B and the mitochondrial AAA ATPase ATAD3A and the role of this complex in the cytoplasmic processing of ATAD3A.</title>
        <authorList>
            <person name="Gilquin B."/>
            <person name="Cannon B.R."/>
            <person name="Hubstenberger A."/>
            <person name="Moulouel B."/>
            <person name="Falk E."/>
            <person name="Merle N."/>
            <person name="Assard N."/>
            <person name="Kieffer S."/>
            <person name="Rousseau D."/>
            <person name="Wilder P.T."/>
            <person name="Weber D.J."/>
            <person name="Baudier J."/>
        </authorList>
    </citation>
    <scope>INTERACTION WITH S100B</scope>
    <scope>DEVELOPMENTAL STAGE</scope>
</reference>
<dbReference type="EC" id="3.6.1.-" evidence="3"/>
<dbReference type="EMBL" id="BC105762">
    <property type="protein sequence ID" value="AAI05763.1"/>
    <property type="molecule type" value="mRNA"/>
</dbReference>
<dbReference type="RefSeq" id="NP_001030094.1">
    <property type="nucleotide sequence ID" value="NM_001034922.1"/>
</dbReference>
<dbReference type="SMR" id="Q3KRE0"/>
<dbReference type="BioGRID" id="255984">
    <property type="interactions" value="1"/>
</dbReference>
<dbReference type="FunCoup" id="Q3KRE0">
    <property type="interactions" value="2492"/>
</dbReference>
<dbReference type="IntAct" id="Q3KRE0">
    <property type="interactions" value="1"/>
</dbReference>
<dbReference type="STRING" id="10116.ENSRNOP00000046842"/>
<dbReference type="GlyGen" id="Q3KRE0">
    <property type="glycosylation" value="1 site, 1 O-linked glycan (1 site)"/>
</dbReference>
<dbReference type="iPTMnet" id="Q3KRE0"/>
<dbReference type="PhosphoSitePlus" id="Q3KRE0"/>
<dbReference type="SwissPalm" id="Q3KRE0"/>
<dbReference type="jPOST" id="Q3KRE0"/>
<dbReference type="PaxDb" id="10116-ENSRNOP00000046842"/>
<dbReference type="Ensembl" id="ENSRNOT00000045053.4">
    <property type="protein sequence ID" value="ENSRNOP00000046842.3"/>
    <property type="gene ID" value="ENSRNOG00000018118.7"/>
</dbReference>
<dbReference type="GeneID" id="298682"/>
<dbReference type="KEGG" id="rno:298682"/>
<dbReference type="AGR" id="RGD:1305964"/>
<dbReference type="CTD" id="55210"/>
<dbReference type="RGD" id="1305964">
    <property type="gene designation" value="Atad3a"/>
</dbReference>
<dbReference type="eggNOG" id="KOG0742">
    <property type="taxonomic scope" value="Eukaryota"/>
</dbReference>
<dbReference type="GeneTree" id="ENSGT00730000111059"/>
<dbReference type="HOGENOM" id="CLU_011488_2_0_1"/>
<dbReference type="InParanoid" id="Q3KRE0"/>
<dbReference type="OMA" id="HKSITGG"/>
<dbReference type="OrthoDB" id="199596at2759"/>
<dbReference type="PhylomeDB" id="Q3KRE0"/>
<dbReference type="TreeFam" id="TF313922"/>
<dbReference type="Reactome" id="R-RNO-6798695">
    <property type="pathway name" value="Neutrophil degranulation"/>
</dbReference>
<dbReference type="PRO" id="PR:Q3KRE0"/>
<dbReference type="Proteomes" id="UP000002494">
    <property type="component" value="Chromosome 5"/>
</dbReference>
<dbReference type="Bgee" id="ENSRNOG00000018118">
    <property type="expression patterns" value="Expressed in ovary and 19 other cell types or tissues"/>
</dbReference>
<dbReference type="GO" id="GO:0044233">
    <property type="term" value="C:mitochondria-associated endoplasmic reticulum membrane contact site"/>
    <property type="evidence" value="ECO:0000266"/>
    <property type="project" value="RGD"/>
</dbReference>
<dbReference type="GO" id="GO:0005743">
    <property type="term" value="C:mitochondrial inner membrane"/>
    <property type="evidence" value="ECO:0000266"/>
    <property type="project" value="RGD"/>
</dbReference>
<dbReference type="GO" id="GO:0042645">
    <property type="term" value="C:mitochondrial nucleoid"/>
    <property type="evidence" value="ECO:0007669"/>
    <property type="project" value="UniProtKB-SubCell"/>
</dbReference>
<dbReference type="GO" id="GO:0005739">
    <property type="term" value="C:mitochondrion"/>
    <property type="evidence" value="ECO:0000266"/>
    <property type="project" value="RGD"/>
</dbReference>
<dbReference type="GO" id="GO:0005524">
    <property type="term" value="F:ATP binding"/>
    <property type="evidence" value="ECO:0000266"/>
    <property type="project" value="RGD"/>
</dbReference>
<dbReference type="GO" id="GO:0016887">
    <property type="term" value="F:ATP hydrolysis activity"/>
    <property type="evidence" value="ECO:0000250"/>
    <property type="project" value="UniProtKB"/>
</dbReference>
<dbReference type="GO" id="GO:0030291">
    <property type="term" value="F:protein serine/threonine kinase inhibitor activity"/>
    <property type="evidence" value="ECO:0000250"/>
    <property type="project" value="UniProtKB"/>
</dbReference>
<dbReference type="GO" id="GO:0140374">
    <property type="term" value="P:antiviral innate immune response"/>
    <property type="evidence" value="ECO:0000250"/>
    <property type="project" value="UniProtKB"/>
</dbReference>
<dbReference type="GO" id="GO:0006974">
    <property type="term" value="P:DNA damage response"/>
    <property type="evidence" value="ECO:0000250"/>
    <property type="project" value="UniProtKB"/>
</dbReference>
<dbReference type="GO" id="GO:0140468">
    <property type="term" value="P:HRI-mediated signaling"/>
    <property type="evidence" value="ECO:0000250"/>
    <property type="project" value="UniProtKB"/>
</dbReference>
<dbReference type="GO" id="GO:0007005">
    <property type="term" value="P:mitochondrion organization"/>
    <property type="evidence" value="ECO:0000266"/>
    <property type="project" value="RGD"/>
</dbReference>
<dbReference type="GO" id="GO:0043066">
    <property type="term" value="P:negative regulation of apoptotic process"/>
    <property type="evidence" value="ECO:0000266"/>
    <property type="project" value="RGD"/>
</dbReference>
<dbReference type="GO" id="GO:1903898">
    <property type="term" value="P:negative regulation of PERK-mediated unfolded protein response"/>
    <property type="evidence" value="ECO:0000250"/>
    <property type="project" value="UniProtKB"/>
</dbReference>
<dbReference type="GO" id="GO:0001558">
    <property type="term" value="P:regulation of cell growth"/>
    <property type="evidence" value="ECO:0000266"/>
    <property type="project" value="RGD"/>
</dbReference>
<dbReference type="CDD" id="cd19512">
    <property type="entry name" value="RecA-like_ATAD3-like"/>
    <property type="match status" value="1"/>
</dbReference>
<dbReference type="FunFam" id="3.40.50.300:FF:000470">
    <property type="entry name" value="ATPase family, AAA domain containing 3A"/>
    <property type="match status" value="1"/>
</dbReference>
<dbReference type="Gene3D" id="3.40.50.300">
    <property type="entry name" value="P-loop containing nucleotide triphosphate hydrolases"/>
    <property type="match status" value="1"/>
</dbReference>
<dbReference type="InterPro" id="IPR003593">
    <property type="entry name" value="AAA+_ATPase"/>
</dbReference>
<dbReference type="InterPro" id="IPR021911">
    <property type="entry name" value="ATAD3_N"/>
</dbReference>
<dbReference type="InterPro" id="IPR003959">
    <property type="entry name" value="ATPase_AAA_core"/>
</dbReference>
<dbReference type="InterPro" id="IPR027417">
    <property type="entry name" value="P-loop_NTPase"/>
</dbReference>
<dbReference type="PANTHER" id="PTHR23075:SF0">
    <property type="entry name" value="ATPASE FAMILY AAA DOMAIN-CONTAINING PROTEIN 3"/>
    <property type="match status" value="1"/>
</dbReference>
<dbReference type="PANTHER" id="PTHR23075">
    <property type="entry name" value="PUTATIVE ATP-ASE"/>
    <property type="match status" value="1"/>
</dbReference>
<dbReference type="Pfam" id="PF00004">
    <property type="entry name" value="AAA"/>
    <property type="match status" value="1"/>
</dbReference>
<dbReference type="Pfam" id="PF12037">
    <property type="entry name" value="ATAD3_N"/>
    <property type="match status" value="1"/>
</dbReference>
<dbReference type="SMART" id="SM00382">
    <property type="entry name" value="AAA"/>
    <property type="match status" value="1"/>
</dbReference>
<dbReference type="SUPFAM" id="SSF52540">
    <property type="entry name" value="P-loop containing nucleoside triphosphate hydrolases"/>
    <property type="match status" value="1"/>
</dbReference>
<feature type="initiator methionine" description="Removed" evidence="1">
    <location>
        <position position="1"/>
    </location>
</feature>
<feature type="chain" id="PRO_0000311981" description="ATPase family AAA domain-containing protein 3A">
    <location>
        <begin position="2"/>
        <end position="591"/>
    </location>
</feature>
<feature type="topological domain" description="Mitochondrial intermembrane" evidence="4">
    <location>
        <begin position="2"/>
        <end position="245"/>
    </location>
</feature>
<feature type="transmembrane region" description="Helical" evidence="4">
    <location>
        <begin position="246"/>
        <end position="263"/>
    </location>
</feature>
<feature type="topological domain" description="Mitochondrial matrix" evidence="4">
    <location>
        <begin position="264"/>
        <end position="591"/>
    </location>
</feature>
<feature type="region of interest" description="Disordered" evidence="5">
    <location>
        <begin position="1"/>
        <end position="52"/>
    </location>
</feature>
<feature type="region of interest" description="Required for interaction with the inner surface of the mitochondrial outer membrane" evidence="3">
    <location>
        <begin position="2"/>
        <end position="49"/>
    </location>
</feature>
<feature type="region of interest" description="S100B-binding" evidence="3">
    <location>
        <begin position="289"/>
        <end position="304"/>
    </location>
</feature>
<feature type="coiled-coil region" evidence="4">
    <location>
        <begin position="55"/>
        <end position="216"/>
    </location>
</feature>
<feature type="compositionally biased region" description="Basic and acidic residues" evidence="5">
    <location>
        <begin position="31"/>
        <end position="47"/>
    </location>
</feature>
<feature type="binding site" evidence="4">
    <location>
        <begin position="351"/>
        <end position="358"/>
    </location>
    <ligand>
        <name>ATP</name>
        <dbReference type="ChEBI" id="CHEBI:30616"/>
    </ligand>
</feature>
<feature type="modified residue" description="N-acetylserine" evidence="1">
    <location>
        <position position="2"/>
    </location>
</feature>
<feature type="modified residue" description="N6-acetyllysine; alternate" evidence="2">
    <location>
        <position position="490"/>
    </location>
</feature>
<feature type="modified residue" description="N6-succinyllysine; alternate" evidence="2">
    <location>
        <position position="490"/>
    </location>
</feature>
<feature type="modified residue" description="N6-acetyllysine" evidence="2">
    <location>
        <position position="494"/>
    </location>
</feature>
<feature type="modified residue" description="N6-acetyllysine" evidence="2">
    <location>
        <position position="512"/>
    </location>
</feature>
<keyword id="KW-0007">Acetylation</keyword>
<keyword id="KW-0067">ATP-binding</keyword>
<keyword id="KW-0175">Coiled coil</keyword>
<keyword id="KW-0378">Hydrolase</keyword>
<keyword id="KW-0472">Membrane</keyword>
<keyword id="KW-0496">Mitochondrion</keyword>
<keyword id="KW-0999">Mitochondrion inner membrane</keyword>
<keyword id="KW-1135">Mitochondrion nucleoid</keyword>
<keyword id="KW-0547">Nucleotide-binding</keyword>
<keyword id="KW-1185">Reference proteome</keyword>
<keyword id="KW-0812">Transmembrane</keyword>
<keyword id="KW-1133">Transmembrane helix</keyword>
<gene>
    <name type="primary">Atad3a</name>
    <name type="synonym">Atad3</name>
</gene>
<evidence type="ECO:0000250" key="1">
    <source>
        <dbReference type="UniProtKB" id="Q5T9A4"/>
    </source>
</evidence>
<evidence type="ECO:0000250" key="2">
    <source>
        <dbReference type="UniProtKB" id="Q925I1"/>
    </source>
</evidence>
<evidence type="ECO:0000250" key="3">
    <source>
        <dbReference type="UniProtKB" id="Q9NVI7"/>
    </source>
</evidence>
<evidence type="ECO:0000255" key="4"/>
<evidence type="ECO:0000256" key="5">
    <source>
        <dbReference type="SAM" id="MobiDB-lite"/>
    </source>
</evidence>
<evidence type="ECO:0000269" key="6">
    <source>
    </source>
</evidence>
<evidence type="ECO:0000269" key="7">
    <source>
    </source>
</evidence>
<evidence type="ECO:0000305" key="8"/>
<organism>
    <name type="scientific">Rattus norvegicus</name>
    <name type="common">Rat</name>
    <dbReference type="NCBI Taxonomy" id="10116"/>
    <lineage>
        <taxon>Eukaryota</taxon>
        <taxon>Metazoa</taxon>
        <taxon>Chordata</taxon>
        <taxon>Craniata</taxon>
        <taxon>Vertebrata</taxon>
        <taxon>Euteleostomi</taxon>
        <taxon>Mammalia</taxon>
        <taxon>Eutheria</taxon>
        <taxon>Euarchontoglires</taxon>
        <taxon>Glires</taxon>
        <taxon>Rodentia</taxon>
        <taxon>Myomorpha</taxon>
        <taxon>Muroidea</taxon>
        <taxon>Muridae</taxon>
        <taxon>Murinae</taxon>
        <taxon>Rattus</taxon>
    </lineage>
</organism>
<proteinExistence type="evidence at protein level"/>
<accession>Q3KRE0</accession>